<reference key="1">
    <citation type="journal article" date="2009" name="PLoS Genet.">
        <title>Organised genome dynamics in the Escherichia coli species results in highly diverse adaptive paths.</title>
        <authorList>
            <person name="Touchon M."/>
            <person name="Hoede C."/>
            <person name="Tenaillon O."/>
            <person name="Barbe V."/>
            <person name="Baeriswyl S."/>
            <person name="Bidet P."/>
            <person name="Bingen E."/>
            <person name="Bonacorsi S."/>
            <person name="Bouchier C."/>
            <person name="Bouvet O."/>
            <person name="Calteau A."/>
            <person name="Chiapello H."/>
            <person name="Clermont O."/>
            <person name="Cruveiller S."/>
            <person name="Danchin A."/>
            <person name="Diard M."/>
            <person name="Dossat C."/>
            <person name="Karoui M.E."/>
            <person name="Frapy E."/>
            <person name="Garry L."/>
            <person name="Ghigo J.M."/>
            <person name="Gilles A.M."/>
            <person name="Johnson J."/>
            <person name="Le Bouguenec C."/>
            <person name="Lescat M."/>
            <person name="Mangenot S."/>
            <person name="Martinez-Jehanne V."/>
            <person name="Matic I."/>
            <person name="Nassif X."/>
            <person name="Oztas S."/>
            <person name="Petit M.A."/>
            <person name="Pichon C."/>
            <person name="Rouy Z."/>
            <person name="Ruf C.S."/>
            <person name="Schneider D."/>
            <person name="Tourret J."/>
            <person name="Vacherie B."/>
            <person name="Vallenet D."/>
            <person name="Medigue C."/>
            <person name="Rocha E.P.C."/>
            <person name="Denamur E."/>
        </authorList>
    </citation>
    <scope>NUCLEOTIDE SEQUENCE [LARGE SCALE GENOMIC DNA]</scope>
    <source>
        <strain>ED1a</strain>
    </source>
</reference>
<feature type="chain" id="PRO_1000185676" description="Probable [Fe-S]-dependent transcriptional repressor">
    <location>
        <begin position="1"/>
        <end position="78"/>
    </location>
</feature>
<feature type="binding site" evidence="1">
    <location>
        <position position="56"/>
    </location>
    <ligand>
        <name>iron-sulfur cluster</name>
        <dbReference type="ChEBI" id="CHEBI:30408"/>
    </ligand>
</feature>
<feature type="binding site" evidence="1">
    <location>
        <position position="61"/>
    </location>
    <ligand>
        <name>iron-sulfur cluster</name>
        <dbReference type="ChEBI" id="CHEBI:30408"/>
    </ligand>
</feature>
<feature type="binding site" evidence="1">
    <location>
        <position position="64"/>
    </location>
    <ligand>
        <name>iron-sulfur cluster</name>
        <dbReference type="ChEBI" id="CHEBI:30408"/>
    </ligand>
</feature>
<feature type="binding site" evidence="1">
    <location>
        <position position="70"/>
    </location>
    <ligand>
        <name>iron-sulfur cluster</name>
        <dbReference type="ChEBI" id="CHEBI:30408"/>
    </ligand>
</feature>
<evidence type="ECO:0000255" key="1">
    <source>
        <dbReference type="HAMAP-Rule" id="MF_01586"/>
    </source>
</evidence>
<sequence length="78" mass="8641">MASLIQVRDLLALRGRMEAAQISQTLNTPQPMINAMLKQLESMGKAVRIQEEPDGCLSGSCKSCPEGKACLHEWWALR</sequence>
<dbReference type="EMBL" id="CU928162">
    <property type="protein sequence ID" value="CAR10061.1"/>
    <property type="molecule type" value="Genomic_DNA"/>
</dbReference>
<dbReference type="RefSeq" id="WP_000157585.1">
    <property type="nucleotide sequence ID" value="NC_011745.1"/>
</dbReference>
<dbReference type="SMR" id="B7N143"/>
<dbReference type="KEGG" id="ecq:ECED1_4070"/>
<dbReference type="HOGENOM" id="CLU_189182_0_0_6"/>
<dbReference type="Proteomes" id="UP000000748">
    <property type="component" value="Chromosome"/>
</dbReference>
<dbReference type="GO" id="GO:0003677">
    <property type="term" value="F:DNA binding"/>
    <property type="evidence" value="ECO:0007669"/>
    <property type="project" value="UniProtKB-KW"/>
</dbReference>
<dbReference type="GO" id="GO:0005506">
    <property type="term" value="F:iron ion binding"/>
    <property type="evidence" value="ECO:0007669"/>
    <property type="project" value="UniProtKB-UniRule"/>
</dbReference>
<dbReference type="GO" id="GO:0051536">
    <property type="term" value="F:iron-sulfur cluster binding"/>
    <property type="evidence" value="ECO:0007669"/>
    <property type="project" value="UniProtKB-KW"/>
</dbReference>
<dbReference type="Gene3D" id="1.10.10.10">
    <property type="entry name" value="Winged helix-like DNA-binding domain superfamily/Winged helix DNA-binding domain"/>
    <property type="match status" value="1"/>
</dbReference>
<dbReference type="HAMAP" id="MF_01586">
    <property type="entry name" value="FeoC"/>
    <property type="match status" value="1"/>
</dbReference>
<dbReference type="InterPro" id="IPR023732">
    <property type="entry name" value="FeoC"/>
</dbReference>
<dbReference type="InterPro" id="IPR015102">
    <property type="entry name" value="Tscrpt_reg_HTH_FeoC"/>
</dbReference>
<dbReference type="InterPro" id="IPR036388">
    <property type="entry name" value="WH-like_DNA-bd_sf"/>
</dbReference>
<dbReference type="InterPro" id="IPR036390">
    <property type="entry name" value="WH_DNA-bd_sf"/>
</dbReference>
<dbReference type="NCBIfam" id="NF011960">
    <property type="entry name" value="PRK15431.1"/>
    <property type="match status" value="1"/>
</dbReference>
<dbReference type="Pfam" id="PF09012">
    <property type="entry name" value="FeoC"/>
    <property type="match status" value="1"/>
</dbReference>
<dbReference type="SUPFAM" id="SSF46785">
    <property type="entry name" value="Winged helix' DNA-binding domain"/>
    <property type="match status" value="1"/>
</dbReference>
<accession>B7N143</accession>
<protein>
    <recommendedName>
        <fullName evidence="1">Probable [Fe-S]-dependent transcriptional repressor</fullName>
    </recommendedName>
</protein>
<gene>
    <name evidence="1" type="primary">feoC</name>
    <name type="ordered locus">ECED1_4070</name>
</gene>
<name>FEOC_ECO81</name>
<keyword id="KW-0238">DNA-binding</keyword>
<keyword id="KW-0408">Iron</keyword>
<keyword id="KW-0411">Iron-sulfur</keyword>
<keyword id="KW-0479">Metal-binding</keyword>
<keyword id="KW-0678">Repressor</keyword>
<keyword id="KW-0804">Transcription</keyword>
<keyword id="KW-0805">Transcription regulation</keyword>
<organism>
    <name type="scientific">Escherichia coli O81 (strain ED1a)</name>
    <dbReference type="NCBI Taxonomy" id="585397"/>
    <lineage>
        <taxon>Bacteria</taxon>
        <taxon>Pseudomonadati</taxon>
        <taxon>Pseudomonadota</taxon>
        <taxon>Gammaproteobacteria</taxon>
        <taxon>Enterobacterales</taxon>
        <taxon>Enterobacteriaceae</taxon>
        <taxon>Escherichia</taxon>
    </lineage>
</organism>
<comment type="function">
    <text evidence="1">May function as a transcriptional regulator that controls feoABC expression.</text>
</comment>
<comment type="similarity">
    <text evidence="1">Belongs to the FeoC family.</text>
</comment>
<proteinExistence type="inferred from homology"/>